<protein>
    <recommendedName>
        <fullName evidence="14">Multifunctional protein CAD</fullName>
    </recommendedName>
    <alternativeName>
        <fullName>Carbamoyl phosphate synthetase 2-aspartate transcarbamylase-dihydroorotase</fullName>
    </alternativeName>
    <domain>
        <recommendedName>
            <fullName>Glutamine-dependent carbamoyl-phosphate synthase</fullName>
            <ecNumber evidence="8">6.3.5.5</ecNumber>
        </recommendedName>
    </domain>
    <domain>
        <recommendedName>
            <fullName>Glutamine amidotransferase</fullName>
            <shortName>GATase</shortName>
            <shortName>GLNase</shortName>
            <ecNumber evidence="4">3.5.1.2</ecNumber>
        </recommendedName>
    </domain>
    <domain>
        <recommendedName>
            <fullName>Ammonium-dependent carbamoyl phosphate synthase</fullName>
            <shortName>CPS</shortName>
            <shortName>CPSase</shortName>
            <ecNumber evidence="4">6.3.4.16</ecNumber>
        </recommendedName>
    </domain>
    <domain>
        <recommendedName>
            <fullName>Aspartate carbamoyltransferase</fullName>
            <ecNumber evidence="8">2.1.3.2</ecNumber>
        </recommendedName>
    </domain>
    <domain>
        <recommendedName>
            <fullName>Dihydroorotase</fullName>
            <ecNumber evidence="8">3.5.2.3</ecNumber>
        </recommendedName>
    </domain>
</protein>
<feature type="initiator methionine" description="Removed" evidence="8">
    <location>
        <position position="1"/>
    </location>
</feature>
<feature type="chain" id="PRO_0000425955" description="Multifunctional protein CAD">
    <location>
        <begin position="2"/>
        <end position="2225"/>
    </location>
</feature>
<feature type="domain" description="Glutamine amidotransferase type-1" evidence="10">
    <location>
        <begin position="177"/>
        <end position="363"/>
    </location>
</feature>
<feature type="domain" description="ATP-grasp 1" evidence="9">
    <location>
        <begin position="519"/>
        <end position="711"/>
    </location>
</feature>
<feature type="domain" description="ATP-grasp 2" evidence="9">
    <location>
        <begin position="1052"/>
        <end position="1243"/>
    </location>
</feature>
<feature type="domain" description="MGS-like" evidence="11">
    <location>
        <begin position="1308"/>
        <end position="1462"/>
    </location>
</feature>
<feature type="region of interest" description="GATase (Glutamine amidotransferase)" evidence="5">
    <location>
        <begin position="2"/>
        <end position="365"/>
    </location>
</feature>
<feature type="region of interest" description="Linker" evidence="5">
    <location>
        <begin position="366"/>
        <end position="394"/>
    </location>
</feature>
<feature type="region of interest" description="CPSase (Carbamoyl-phosphate synthase)" evidence="5">
    <location>
        <begin position="395"/>
        <end position="1455"/>
    </location>
</feature>
<feature type="region of interest" description="CPSase A" evidence="5">
    <location>
        <begin position="395"/>
        <end position="933"/>
    </location>
</feature>
<feature type="region of interest" description="CPSase B" evidence="5">
    <location>
        <begin position="934"/>
        <end position="1455"/>
    </location>
</feature>
<feature type="region of interest" description="DHOase (dihydroorotase)" evidence="5">
    <location>
        <begin position="1456"/>
        <end position="1788"/>
    </location>
</feature>
<feature type="region of interest" description="Linker" evidence="5">
    <location>
        <begin position="1789"/>
        <end position="1917"/>
    </location>
</feature>
<feature type="region of interest" description="Disordered" evidence="12">
    <location>
        <begin position="1815"/>
        <end position="1885"/>
    </location>
</feature>
<feature type="region of interest" description="ATCase (Aspartate transcarbamylase)" evidence="5">
    <location>
        <begin position="1918"/>
        <end position="2225"/>
    </location>
</feature>
<feature type="compositionally biased region" description="Low complexity" evidence="12">
    <location>
        <begin position="1825"/>
        <end position="1834"/>
    </location>
</feature>
<feature type="compositionally biased region" description="Basic and acidic residues" evidence="12">
    <location>
        <begin position="1866"/>
        <end position="1878"/>
    </location>
</feature>
<feature type="active site" description="Nucleophile; for GATase activity" evidence="10">
    <location>
        <position position="252"/>
    </location>
</feature>
<feature type="active site" description="For GATase activity" evidence="10">
    <location>
        <position position="336"/>
    </location>
</feature>
<feature type="active site" description="For GATase activity" evidence="10">
    <location>
        <position position="338"/>
    </location>
</feature>
<feature type="active site" description="For DHOase activity" evidence="3">
    <location>
        <position position="1686"/>
    </location>
</feature>
<feature type="binding site" evidence="6">
    <location>
        <position position="44"/>
    </location>
    <ligand>
        <name>L-glutamine</name>
        <dbReference type="ChEBI" id="CHEBI:58359"/>
    </ligand>
</feature>
<feature type="binding site" evidence="6">
    <location>
        <position position="222"/>
    </location>
    <ligand>
        <name>L-glutamine</name>
        <dbReference type="ChEBI" id="CHEBI:58359"/>
    </ligand>
</feature>
<feature type="binding site" evidence="6">
    <location>
        <position position="224"/>
    </location>
    <ligand>
        <name>L-glutamine</name>
        <dbReference type="ChEBI" id="CHEBI:58359"/>
    </ligand>
</feature>
<feature type="binding site" evidence="6">
    <location>
        <position position="253"/>
    </location>
    <ligand>
        <name>L-glutamine</name>
        <dbReference type="ChEBI" id="CHEBI:58359"/>
    </ligand>
</feature>
<feature type="binding site" evidence="6">
    <location>
        <position position="256"/>
    </location>
    <ligand>
        <name>L-glutamine</name>
        <dbReference type="ChEBI" id="CHEBI:58359"/>
    </ligand>
</feature>
<feature type="binding site" evidence="6">
    <location>
        <position position="294"/>
    </location>
    <ligand>
        <name>L-glutamine</name>
        <dbReference type="ChEBI" id="CHEBI:58359"/>
    </ligand>
</feature>
<feature type="binding site" evidence="6">
    <location>
        <position position="296"/>
    </location>
    <ligand>
        <name>L-glutamine</name>
        <dbReference type="ChEBI" id="CHEBI:58359"/>
    </ligand>
</feature>
<feature type="binding site" evidence="6">
    <location>
        <position position="297"/>
    </location>
    <ligand>
        <name>L-glutamine</name>
        <dbReference type="ChEBI" id="CHEBI:58359"/>
    </ligand>
</feature>
<feature type="binding site" evidence="2">
    <location>
        <position position="515"/>
    </location>
    <ligand>
        <name>ATP</name>
        <dbReference type="ChEBI" id="CHEBI:30616"/>
        <label>1</label>
    </ligand>
</feature>
<feature type="binding site" evidence="2">
    <location>
        <position position="555"/>
    </location>
    <ligand>
        <name>ATP</name>
        <dbReference type="ChEBI" id="CHEBI:30616"/>
        <label>1</label>
    </ligand>
</feature>
<feature type="binding site" evidence="2">
    <location>
        <position position="561"/>
    </location>
    <ligand>
        <name>ATP</name>
        <dbReference type="ChEBI" id="CHEBI:30616"/>
        <label>1</label>
    </ligand>
</feature>
<feature type="binding site" evidence="2">
    <location>
        <position position="562"/>
    </location>
    <ligand>
        <name>ATP</name>
        <dbReference type="ChEBI" id="CHEBI:30616"/>
        <label>1</label>
    </ligand>
</feature>
<feature type="binding site" evidence="2">
    <location>
        <position position="592"/>
    </location>
    <ligand>
        <name>ATP</name>
        <dbReference type="ChEBI" id="CHEBI:30616"/>
        <label>1</label>
    </ligand>
</feature>
<feature type="binding site" evidence="2">
    <location>
        <position position="599"/>
    </location>
    <ligand>
        <name>ATP</name>
        <dbReference type="ChEBI" id="CHEBI:30616"/>
        <label>1</label>
    </ligand>
</feature>
<feature type="binding site" evidence="2">
    <location>
        <position position="625"/>
    </location>
    <ligand>
        <name>ATP</name>
        <dbReference type="ChEBI" id="CHEBI:30616"/>
        <label>1</label>
    </ligand>
</feature>
<feature type="binding site" evidence="2">
    <location>
        <position position="626"/>
    </location>
    <ligand>
        <name>ATP</name>
        <dbReference type="ChEBI" id="CHEBI:30616"/>
        <label>1</label>
    </ligand>
</feature>
<feature type="binding site" evidence="2">
    <location>
        <position position="627"/>
    </location>
    <ligand>
        <name>ATP</name>
        <dbReference type="ChEBI" id="CHEBI:30616"/>
        <label>1</label>
    </ligand>
</feature>
<feature type="binding site" evidence="2">
    <location>
        <position position="668"/>
    </location>
    <ligand>
        <name>ATP</name>
        <dbReference type="ChEBI" id="CHEBI:30616"/>
        <label>1</label>
    </ligand>
</feature>
<feature type="binding site" evidence="9">
    <location>
        <position position="668"/>
    </location>
    <ligand>
        <name>Mg(2+)</name>
        <dbReference type="ChEBI" id="CHEBI:18420"/>
        <label>1</label>
    </ligand>
</feature>
<feature type="binding site" evidence="9">
    <location>
        <position position="668"/>
    </location>
    <ligand>
        <name>Mn(2+)</name>
        <dbReference type="ChEBI" id="CHEBI:29035"/>
        <label>1</label>
    </ligand>
</feature>
<feature type="binding site" evidence="2">
    <location>
        <position position="682"/>
    </location>
    <ligand>
        <name>ATP</name>
        <dbReference type="ChEBI" id="CHEBI:30616"/>
        <label>1</label>
    </ligand>
</feature>
<feature type="binding site" evidence="9">
    <location>
        <position position="682"/>
    </location>
    <ligand>
        <name>Mg(2+)</name>
        <dbReference type="ChEBI" id="CHEBI:18420"/>
        <label>1</label>
    </ligand>
</feature>
<feature type="binding site" evidence="9">
    <location>
        <position position="682"/>
    </location>
    <ligand>
        <name>Mg(2+)</name>
        <dbReference type="ChEBI" id="CHEBI:18420"/>
        <label>2</label>
    </ligand>
</feature>
<feature type="binding site" evidence="9">
    <location>
        <position position="682"/>
    </location>
    <ligand>
        <name>Mn(2+)</name>
        <dbReference type="ChEBI" id="CHEBI:29035"/>
        <label>1</label>
    </ligand>
</feature>
<feature type="binding site" evidence="9">
    <location>
        <position position="682"/>
    </location>
    <ligand>
        <name>Mn(2+)</name>
        <dbReference type="ChEBI" id="CHEBI:29035"/>
        <label>2</label>
    </ligand>
</feature>
<feature type="binding site" evidence="9">
    <location>
        <position position="684"/>
    </location>
    <ligand>
        <name>Mg(2+)</name>
        <dbReference type="ChEBI" id="CHEBI:18420"/>
        <label>2</label>
    </ligand>
</feature>
<feature type="binding site" evidence="9">
    <location>
        <position position="684"/>
    </location>
    <ligand>
        <name>Mn(2+)</name>
        <dbReference type="ChEBI" id="CHEBI:29035"/>
        <label>2</label>
    </ligand>
</feature>
<feature type="binding site" evidence="2">
    <location>
        <position position="1088"/>
    </location>
    <ligand>
        <name>ATP</name>
        <dbReference type="ChEBI" id="CHEBI:30616"/>
        <label>2</label>
    </ligand>
</feature>
<feature type="binding site" evidence="2">
    <location>
        <position position="1127"/>
    </location>
    <ligand>
        <name>ATP</name>
        <dbReference type="ChEBI" id="CHEBI:30616"/>
        <label>2</label>
    </ligand>
</feature>
<feature type="binding site" evidence="2">
    <location>
        <position position="1129"/>
    </location>
    <ligand>
        <name>ATP</name>
        <dbReference type="ChEBI" id="CHEBI:30616"/>
        <label>2</label>
    </ligand>
</feature>
<feature type="binding site" evidence="2">
    <location>
        <position position="1134"/>
    </location>
    <ligand>
        <name>ATP</name>
        <dbReference type="ChEBI" id="CHEBI:30616"/>
        <label>2</label>
    </ligand>
</feature>
<feature type="binding site" evidence="2">
    <location>
        <position position="1159"/>
    </location>
    <ligand>
        <name>ATP</name>
        <dbReference type="ChEBI" id="CHEBI:30616"/>
        <label>2</label>
    </ligand>
</feature>
<feature type="binding site" evidence="2">
    <location>
        <position position="1160"/>
    </location>
    <ligand>
        <name>ATP</name>
        <dbReference type="ChEBI" id="CHEBI:30616"/>
        <label>2</label>
    </ligand>
</feature>
<feature type="binding site" evidence="2">
    <location>
        <position position="1161"/>
    </location>
    <ligand>
        <name>ATP</name>
        <dbReference type="ChEBI" id="CHEBI:30616"/>
        <label>2</label>
    </ligand>
</feature>
<feature type="binding site" evidence="2">
    <location>
        <position position="1162"/>
    </location>
    <ligand>
        <name>ATP</name>
        <dbReference type="ChEBI" id="CHEBI:30616"/>
        <label>2</label>
    </ligand>
</feature>
<feature type="binding site" evidence="2">
    <location>
        <position position="1202"/>
    </location>
    <ligand>
        <name>ATP</name>
        <dbReference type="ChEBI" id="CHEBI:30616"/>
        <label>2</label>
    </ligand>
</feature>
<feature type="binding site" evidence="9">
    <location>
        <position position="1202"/>
    </location>
    <ligand>
        <name>Mg(2+)</name>
        <dbReference type="ChEBI" id="CHEBI:18420"/>
        <label>3</label>
    </ligand>
</feature>
<feature type="binding site" evidence="9">
    <location>
        <position position="1202"/>
    </location>
    <ligand>
        <name>Mn(2+)</name>
        <dbReference type="ChEBI" id="CHEBI:29035"/>
        <label>3</label>
    </ligand>
</feature>
<feature type="binding site" evidence="2">
    <location>
        <position position="1214"/>
    </location>
    <ligand>
        <name>ATP</name>
        <dbReference type="ChEBI" id="CHEBI:30616"/>
        <label>2</label>
    </ligand>
</feature>
<feature type="binding site" evidence="9">
    <location>
        <position position="1214"/>
    </location>
    <ligand>
        <name>Mg(2+)</name>
        <dbReference type="ChEBI" id="CHEBI:18420"/>
        <label>3</label>
    </ligand>
</feature>
<feature type="binding site" evidence="9">
    <location>
        <position position="1214"/>
    </location>
    <ligand>
        <name>Mg(2+)</name>
        <dbReference type="ChEBI" id="CHEBI:18420"/>
        <label>4</label>
    </ligand>
</feature>
<feature type="binding site" evidence="9">
    <location>
        <position position="1214"/>
    </location>
    <ligand>
        <name>Mn(2+)</name>
        <dbReference type="ChEBI" id="CHEBI:29035"/>
        <label>3</label>
    </ligand>
</feature>
<feature type="binding site" evidence="9">
    <location>
        <position position="1214"/>
    </location>
    <ligand>
        <name>Mn(2+)</name>
        <dbReference type="ChEBI" id="CHEBI:29035"/>
        <label>4</label>
    </ligand>
</feature>
<feature type="binding site" evidence="9">
    <location>
        <position position="1216"/>
    </location>
    <ligand>
        <name>Mg(2+)</name>
        <dbReference type="ChEBI" id="CHEBI:18420"/>
        <label>4</label>
    </ligand>
</feature>
<feature type="binding site" evidence="9">
    <location>
        <position position="1216"/>
    </location>
    <ligand>
        <name>Mn(2+)</name>
        <dbReference type="ChEBI" id="CHEBI:29035"/>
        <label>4</label>
    </ligand>
</feature>
<feature type="binding site" evidence="8">
    <location>
        <position position="1471"/>
    </location>
    <ligand>
        <name>Zn(2+)</name>
        <dbReference type="ChEBI" id="CHEBI:29105"/>
        <label>1</label>
    </ligand>
</feature>
<feature type="binding site" evidence="8">
    <location>
        <position position="1471"/>
    </location>
    <ligand>
        <name>Zn(2+)</name>
        <dbReference type="ChEBI" id="CHEBI:29105"/>
        <label>2</label>
    </ligand>
</feature>
<feature type="binding site" evidence="8">
    <location>
        <position position="1473"/>
    </location>
    <ligand>
        <name>Zn(2+)</name>
        <dbReference type="ChEBI" id="CHEBI:29105"/>
        <label>1</label>
    </ligand>
</feature>
<feature type="binding site" evidence="8">
    <location>
        <position position="1475"/>
    </location>
    <ligand>
        <name>(S)-dihydroorotate</name>
        <dbReference type="ChEBI" id="CHEBI:30864"/>
    </ligand>
</feature>
<feature type="binding site" evidence="8">
    <location>
        <position position="1505"/>
    </location>
    <ligand>
        <name>(S)-dihydroorotate</name>
        <dbReference type="ChEBI" id="CHEBI:30864"/>
    </ligand>
</feature>
<feature type="binding site" description="via carbamate group" evidence="8">
    <location>
        <position position="1556"/>
    </location>
    <ligand>
        <name>Zn(2+)</name>
        <dbReference type="ChEBI" id="CHEBI:29105"/>
        <label>1</label>
    </ligand>
</feature>
<feature type="binding site" description="via carbamate group" evidence="8">
    <location>
        <position position="1556"/>
    </location>
    <ligand>
        <name>Zn(2+)</name>
        <dbReference type="ChEBI" id="CHEBI:29105"/>
        <label>3</label>
    </ligand>
</feature>
<feature type="binding site" evidence="8">
    <location>
        <position position="1590"/>
    </location>
    <ligand>
        <name>Zn(2+)</name>
        <dbReference type="ChEBI" id="CHEBI:29105"/>
        <label>3</label>
    </ligand>
</feature>
<feature type="binding site" evidence="8">
    <location>
        <position position="1613"/>
    </location>
    <ligand>
        <name>Zn(2+)</name>
        <dbReference type="ChEBI" id="CHEBI:29105"/>
        <label>2</label>
    </ligand>
</feature>
<feature type="binding site" evidence="8">
    <location>
        <position position="1614"/>
    </location>
    <ligand>
        <name>Zn(2+)</name>
        <dbReference type="ChEBI" id="CHEBI:29105"/>
        <label>3</label>
    </ligand>
</feature>
<feature type="binding site" evidence="8">
    <location>
        <position position="1637"/>
    </location>
    <ligand>
        <name>Zn(2+)</name>
        <dbReference type="ChEBI" id="CHEBI:29105"/>
        <label>2</label>
    </ligand>
</feature>
<feature type="binding site" evidence="8">
    <location>
        <position position="1661"/>
    </location>
    <ligand>
        <name>(S)-dihydroorotate</name>
        <dbReference type="ChEBI" id="CHEBI:30864"/>
    </ligand>
</feature>
<feature type="binding site" evidence="8">
    <location>
        <position position="1686"/>
    </location>
    <ligand>
        <name>Zn(2+)</name>
        <dbReference type="ChEBI" id="CHEBI:29105"/>
        <label>1</label>
    </ligand>
</feature>
<feature type="binding site" evidence="8">
    <location>
        <position position="1690"/>
    </location>
    <ligand>
        <name>(S)-dihydroorotate</name>
        <dbReference type="ChEBI" id="CHEBI:30864"/>
    </ligand>
</feature>
<feature type="binding site" evidence="8">
    <location>
        <position position="1702"/>
    </location>
    <ligand>
        <name>(S)-dihydroorotate</name>
        <dbReference type="ChEBI" id="CHEBI:30864"/>
    </ligand>
</feature>
<feature type="binding site" evidence="7">
    <location>
        <position position="1975"/>
    </location>
    <ligand>
        <name>carbamoyl phosphate</name>
        <dbReference type="ChEBI" id="CHEBI:58228"/>
    </ligand>
</feature>
<feature type="binding site" evidence="7">
    <location>
        <position position="1976"/>
    </location>
    <ligand>
        <name>carbamoyl phosphate</name>
        <dbReference type="ChEBI" id="CHEBI:58228"/>
    </ligand>
</feature>
<feature type="binding site" evidence="7">
    <location>
        <position position="2003"/>
    </location>
    <ligand>
        <name>L-aspartate</name>
        <dbReference type="ChEBI" id="CHEBI:29991"/>
    </ligand>
</feature>
<feature type="binding site" evidence="7">
    <location>
        <position position="2024"/>
    </location>
    <ligand>
        <name>carbamoyl phosphate</name>
        <dbReference type="ChEBI" id="CHEBI:58228"/>
    </ligand>
</feature>
<feature type="binding site" evidence="7">
    <location>
        <position position="2052"/>
    </location>
    <ligand>
        <name>carbamoyl phosphate</name>
        <dbReference type="ChEBI" id="CHEBI:58228"/>
    </ligand>
</feature>
<feature type="binding site" evidence="7">
    <location>
        <position position="2055"/>
    </location>
    <ligand>
        <name>carbamoyl phosphate</name>
        <dbReference type="ChEBI" id="CHEBI:58228"/>
    </ligand>
</feature>
<feature type="binding site" evidence="7">
    <location>
        <position position="2085"/>
    </location>
    <ligand>
        <name>L-aspartate</name>
        <dbReference type="ChEBI" id="CHEBI:29991"/>
    </ligand>
</feature>
<feature type="binding site" evidence="7">
    <location>
        <position position="2146"/>
    </location>
    <ligand>
        <name>L-aspartate</name>
        <dbReference type="ChEBI" id="CHEBI:29991"/>
    </ligand>
</feature>
<feature type="binding site" evidence="7">
    <location>
        <position position="2185"/>
    </location>
    <ligand>
        <name>carbamoyl phosphate</name>
        <dbReference type="ChEBI" id="CHEBI:58228"/>
    </ligand>
</feature>
<feature type="binding site" evidence="7">
    <location>
        <position position="2186"/>
    </location>
    <ligand>
        <name>carbamoyl phosphate</name>
        <dbReference type="ChEBI" id="CHEBI:58228"/>
    </ligand>
</feature>
<feature type="modified residue" description="N-acetylalanine" evidence="8">
    <location>
        <position position="2"/>
    </location>
</feature>
<feature type="modified residue" description="Phosphothreonine; by MAPK1" evidence="8">
    <location>
        <position position="456"/>
    </location>
</feature>
<feature type="modified residue" description="N6-acetyllysine" evidence="8">
    <location>
        <position position="747"/>
    </location>
</feature>
<feature type="modified residue" description="Phosphoserine" evidence="8">
    <location>
        <position position="1038"/>
    </location>
</feature>
<feature type="modified residue" description="Phosphoserine; by PKA" evidence="8">
    <location>
        <position position="1406"/>
    </location>
</feature>
<feature type="modified residue" description="N6-acetyllysine" evidence="8">
    <location>
        <position position="1411"/>
    </location>
</feature>
<feature type="modified residue" description="N6-carboxylysine" evidence="8">
    <location>
        <position position="1556"/>
    </location>
</feature>
<feature type="modified residue" description="Phosphoserine" evidence="15">
    <location>
        <position position="1859"/>
    </location>
</feature>
<feature type="modified residue" description="Phosphothreonine" evidence="8">
    <location>
        <position position="1884"/>
    </location>
</feature>
<feature type="modified residue" description="Phosphoserine" evidence="8">
    <location>
        <position position="1900"/>
    </location>
</feature>
<feature type="modified residue" description="Phosphoserine" evidence="8">
    <location>
        <position position="1938"/>
    </location>
</feature>
<feature type="splice variant" id="VSP_053912" description="In isoform 2." evidence="13">
    <location>
        <begin position="1962"/>
        <end position="2032"/>
    </location>
</feature>
<comment type="function">
    <text evidence="8">Multifunctional protein that encodes the first 3 enzymatic activities of the de novo pyrimidine pathway: carbamoylphosphate synthetase (CPSase; EC 6.3.5.5), aspartate transcarbamylase (ATCase; EC 2.1.3.2) and dihydroorotase (DHOase; EC 3.5.2.3). The CPSase-function is accomplished in 2 steps, by a glutamine-dependent amidotransferase activity (GATase) that binds and cleaves glutamine to produce ammonia, followed by an ammonium-dependent carbamoyl phosphate synthetase, which reacts with the ammonia, hydrogencarbonate and ATP to form carbamoyl phosphate. The endogenously produced carbamoyl phosphate is sequestered and channeled to the ATCase active site. ATCase then catalyzes the formation of carbamoyl-L-aspartate from L-aspartate and carbamoyl phosphate. In the last step, DHOase catalyzes the cyclization of carbamoyl aspartate to dihydroorotate.</text>
</comment>
<comment type="catalytic activity">
    <reaction evidence="8">
        <text>hydrogencarbonate + L-glutamine + 2 ATP + H2O = carbamoyl phosphate + L-glutamate + 2 ADP + phosphate + 2 H(+)</text>
        <dbReference type="Rhea" id="RHEA:18633"/>
        <dbReference type="ChEBI" id="CHEBI:15377"/>
        <dbReference type="ChEBI" id="CHEBI:15378"/>
        <dbReference type="ChEBI" id="CHEBI:17544"/>
        <dbReference type="ChEBI" id="CHEBI:29985"/>
        <dbReference type="ChEBI" id="CHEBI:30616"/>
        <dbReference type="ChEBI" id="CHEBI:43474"/>
        <dbReference type="ChEBI" id="CHEBI:58228"/>
        <dbReference type="ChEBI" id="CHEBI:58359"/>
        <dbReference type="ChEBI" id="CHEBI:456216"/>
        <dbReference type="EC" id="6.3.5.5"/>
    </reaction>
</comment>
<comment type="catalytic activity">
    <reaction evidence="4">
        <text>L-glutamine + H2O = L-glutamate + NH4(+)</text>
        <dbReference type="Rhea" id="RHEA:15889"/>
        <dbReference type="ChEBI" id="CHEBI:15377"/>
        <dbReference type="ChEBI" id="CHEBI:28938"/>
        <dbReference type="ChEBI" id="CHEBI:29985"/>
        <dbReference type="ChEBI" id="CHEBI:58359"/>
        <dbReference type="EC" id="3.5.1.2"/>
    </reaction>
</comment>
<comment type="catalytic activity">
    <reaction evidence="4">
        <text>hydrogencarbonate + NH4(+) + 2 ATP = carbamoyl phosphate + 2 ADP + phosphate + 2 H(+)</text>
        <dbReference type="Rhea" id="RHEA:18029"/>
        <dbReference type="ChEBI" id="CHEBI:15378"/>
        <dbReference type="ChEBI" id="CHEBI:17544"/>
        <dbReference type="ChEBI" id="CHEBI:28938"/>
        <dbReference type="ChEBI" id="CHEBI:30616"/>
        <dbReference type="ChEBI" id="CHEBI:43474"/>
        <dbReference type="ChEBI" id="CHEBI:58228"/>
        <dbReference type="ChEBI" id="CHEBI:456216"/>
        <dbReference type="EC" id="6.3.4.16"/>
    </reaction>
</comment>
<comment type="catalytic activity">
    <reaction evidence="8">
        <text>carbamoyl phosphate + L-aspartate = N-carbamoyl-L-aspartate + phosphate + H(+)</text>
        <dbReference type="Rhea" id="RHEA:20013"/>
        <dbReference type="ChEBI" id="CHEBI:15378"/>
        <dbReference type="ChEBI" id="CHEBI:29991"/>
        <dbReference type="ChEBI" id="CHEBI:32814"/>
        <dbReference type="ChEBI" id="CHEBI:43474"/>
        <dbReference type="ChEBI" id="CHEBI:58228"/>
        <dbReference type="EC" id="2.1.3.2"/>
    </reaction>
</comment>
<comment type="catalytic activity">
    <reaction evidence="8">
        <text>(S)-dihydroorotate + H2O = N-carbamoyl-L-aspartate + H(+)</text>
        <dbReference type="Rhea" id="RHEA:24296"/>
        <dbReference type="ChEBI" id="CHEBI:15377"/>
        <dbReference type="ChEBI" id="CHEBI:15378"/>
        <dbReference type="ChEBI" id="CHEBI:30864"/>
        <dbReference type="ChEBI" id="CHEBI:32814"/>
        <dbReference type="EC" id="3.5.2.3"/>
    </reaction>
</comment>
<comment type="cofactor">
    <cofactor evidence="8">
        <name>Zn(2+)</name>
        <dbReference type="ChEBI" id="CHEBI:29105"/>
    </cofactor>
    <text evidence="8">Binds 3 Zn(2+) ions per subunit (for dihydroorotase activity).</text>
</comment>
<comment type="cofactor">
    <cofactor evidence="9">
        <name>Mg(2+)</name>
        <dbReference type="ChEBI" id="CHEBI:18420"/>
    </cofactor>
    <cofactor evidence="9">
        <name>Mn(2+)</name>
        <dbReference type="ChEBI" id="CHEBI:29035"/>
    </cofactor>
    <text evidence="9">Binds 4 magnesium or manganese ions per subunit.</text>
</comment>
<comment type="activity regulation">
    <text evidence="1">Allosterically regulated and controlled by phosphorylation. 5-phosphoribose 1-diphosphate (PRPP) is an activator while UMP and UTP are inhibitors of the CPSase reaction (By similarity).</text>
</comment>
<comment type="pathway">
    <text>Pyrimidine metabolism; UMP biosynthesis via de novo pathway; (S)-dihydroorotate from bicarbonate: step 1/3.</text>
</comment>
<comment type="pathway">
    <text>Pyrimidine metabolism; UMP biosynthesis via de novo pathway; (S)-dihydroorotate from bicarbonate: step 2/3.</text>
</comment>
<comment type="pathway">
    <text>Pyrimidine metabolism; UMP biosynthesis via de novo pathway; (S)-dihydroorotate from bicarbonate: step 3/3.</text>
</comment>
<comment type="subunit">
    <text evidence="8">Homohexamer. Interacts with CIPC.</text>
</comment>
<comment type="subcellular location">
    <subcellularLocation>
        <location evidence="1">Cytoplasm</location>
    </subcellularLocation>
    <subcellularLocation>
        <location evidence="1">Nucleus</location>
    </subcellularLocation>
    <text evidence="1">Cytosolic and unphosphorylated in resting cells, translocates to the nucleus in response to EGF stimulation, nuclear import promotes optimal cell growth.</text>
</comment>
<comment type="alternative products">
    <event type="alternative splicing"/>
    <isoform>
        <id>B2RQC6-1</id>
        <name>1</name>
        <sequence type="displayed"/>
    </isoform>
    <isoform>
        <id>B2RQC6-2</id>
        <name>2</name>
        <sequence type="described" ref="VSP_053912"/>
    </isoform>
</comment>
<comment type="PTM">
    <text evidence="1">Activated by MAP kinase (Erk1/2) phosphorylation just prior to the S phase of the cell cycle, when the demand for pyrimidine nucleotides is greatest, and down-regulated as the cells emerge from S phase by protein kinase A (PKA) phosphorylation. Phosphorylation at Ser-1859 by RPS6KB1 downstream of MTOR promotes oligomerization and stimulates dihydroorotase activity. Phosphorylation at Ser-1406 reduces sensitivity to feedback inhibition by UTP (By similarity).</text>
</comment>
<comment type="miscellaneous">
    <text evidence="4">GATase (glutamine amidotransferase) and CPSase (carbamoyl phosphate synthase) form together the glutamine-dependent CPSase (GD-CPSase) (EC 6.3.5.5).</text>
</comment>
<comment type="similarity">
    <text evidence="14">In the N-terminal section; belongs to the CarA family.</text>
</comment>
<comment type="similarity">
    <text evidence="14">In the 2nd section; belongs to the CarB family.</text>
</comment>
<comment type="similarity">
    <text evidence="14">In the 3rd section; belongs to the metallo-dependent hydrolases superfamily. DHOase family. CAD subfamily.</text>
</comment>
<comment type="similarity">
    <text evidence="14">In the C-terminal section; belongs to the aspartate/ornithine carbamoyltransferase superfamily. ATCase family.</text>
</comment>
<evidence type="ECO:0000250" key="1"/>
<evidence type="ECO:0000250" key="2">
    <source>
        <dbReference type="UniProtKB" id="P00968"/>
    </source>
</evidence>
<evidence type="ECO:0000250" key="3">
    <source>
        <dbReference type="UniProtKB" id="P05020"/>
    </source>
</evidence>
<evidence type="ECO:0000250" key="4">
    <source>
        <dbReference type="UniProtKB" id="P07259"/>
    </source>
</evidence>
<evidence type="ECO:0000250" key="5">
    <source>
        <dbReference type="UniProtKB" id="P08955"/>
    </source>
</evidence>
<evidence type="ECO:0000250" key="6">
    <source>
        <dbReference type="UniProtKB" id="P0A6F1"/>
    </source>
</evidence>
<evidence type="ECO:0000250" key="7">
    <source>
        <dbReference type="UniProtKB" id="P0A786"/>
    </source>
</evidence>
<evidence type="ECO:0000250" key="8">
    <source>
        <dbReference type="UniProtKB" id="P27708"/>
    </source>
</evidence>
<evidence type="ECO:0000255" key="9">
    <source>
        <dbReference type="PROSITE-ProRule" id="PRU00409"/>
    </source>
</evidence>
<evidence type="ECO:0000255" key="10">
    <source>
        <dbReference type="PROSITE-ProRule" id="PRU00605"/>
    </source>
</evidence>
<evidence type="ECO:0000255" key="11">
    <source>
        <dbReference type="PROSITE-ProRule" id="PRU01202"/>
    </source>
</evidence>
<evidence type="ECO:0000256" key="12">
    <source>
        <dbReference type="SAM" id="MobiDB-lite"/>
    </source>
</evidence>
<evidence type="ECO:0000303" key="13">
    <source>
    </source>
</evidence>
<evidence type="ECO:0000305" key="14"/>
<evidence type="ECO:0007744" key="15">
    <source>
    </source>
</evidence>
<keyword id="KW-0007">Acetylation</keyword>
<keyword id="KW-0021">Allosteric enzyme</keyword>
<keyword id="KW-0025">Alternative splicing</keyword>
<keyword id="KW-0067">ATP-binding</keyword>
<keyword id="KW-0963">Cytoplasm</keyword>
<keyword id="KW-0315">Glutamine amidotransferase</keyword>
<keyword id="KW-0378">Hydrolase</keyword>
<keyword id="KW-0436">Ligase</keyword>
<keyword id="KW-0460">Magnesium</keyword>
<keyword id="KW-0464">Manganese</keyword>
<keyword id="KW-0479">Metal-binding</keyword>
<keyword id="KW-0511">Multifunctional enzyme</keyword>
<keyword id="KW-0547">Nucleotide-binding</keyword>
<keyword id="KW-0539">Nucleus</keyword>
<keyword id="KW-0597">Phosphoprotein</keyword>
<keyword id="KW-0665">Pyrimidine biosynthesis</keyword>
<keyword id="KW-1185">Reference proteome</keyword>
<keyword id="KW-0677">Repeat</keyword>
<keyword id="KW-0808">Transferase</keyword>
<keyword id="KW-0862">Zinc</keyword>
<organism>
    <name type="scientific">Mus musculus</name>
    <name type="common">Mouse</name>
    <dbReference type="NCBI Taxonomy" id="10090"/>
    <lineage>
        <taxon>Eukaryota</taxon>
        <taxon>Metazoa</taxon>
        <taxon>Chordata</taxon>
        <taxon>Craniata</taxon>
        <taxon>Vertebrata</taxon>
        <taxon>Euteleostomi</taxon>
        <taxon>Mammalia</taxon>
        <taxon>Eutheria</taxon>
        <taxon>Euarchontoglires</taxon>
        <taxon>Glires</taxon>
        <taxon>Rodentia</taxon>
        <taxon>Myomorpha</taxon>
        <taxon>Muroidea</taxon>
        <taxon>Muridae</taxon>
        <taxon>Murinae</taxon>
        <taxon>Mus</taxon>
        <taxon>Mus</taxon>
    </lineage>
</organism>
<accession>B2RQC6</accession>
<accession>B7ZN27</accession>
<reference key="1">
    <citation type="journal article" date="2009" name="PLoS Biol.">
        <title>Lineage-specific biology revealed by a finished genome assembly of the mouse.</title>
        <authorList>
            <person name="Church D.M."/>
            <person name="Goodstadt L."/>
            <person name="Hillier L.W."/>
            <person name="Zody M.C."/>
            <person name="Goldstein S."/>
            <person name="She X."/>
            <person name="Bult C.J."/>
            <person name="Agarwala R."/>
            <person name="Cherry J.L."/>
            <person name="DiCuccio M."/>
            <person name="Hlavina W."/>
            <person name="Kapustin Y."/>
            <person name="Meric P."/>
            <person name="Maglott D."/>
            <person name="Birtle Z."/>
            <person name="Marques A.C."/>
            <person name="Graves T."/>
            <person name="Zhou S."/>
            <person name="Teague B."/>
            <person name="Potamousis K."/>
            <person name="Churas C."/>
            <person name="Place M."/>
            <person name="Herschleb J."/>
            <person name="Runnheim R."/>
            <person name="Forrest D."/>
            <person name="Amos-Landgraf J."/>
            <person name="Schwartz D.C."/>
            <person name="Cheng Z."/>
            <person name="Lindblad-Toh K."/>
            <person name="Eichler E.E."/>
            <person name="Ponting C.P."/>
        </authorList>
    </citation>
    <scope>NUCLEOTIDE SEQUENCE [LARGE SCALE GENOMIC DNA]</scope>
    <source>
        <strain>C57BL/6J</strain>
    </source>
</reference>
<reference key="2">
    <citation type="submission" date="2005-07" db="EMBL/GenBank/DDBJ databases">
        <authorList>
            <person name="Mural R.J."/>
            <person name="Adams M.D."/>
            <person name="Myers E.W."/>
            <person name="Smith H.O."/>
            <person name="Venter J.C."/>
        </authorList>
    </citation>
    <scope>NUCLEOTIDE SEQUENCE [LARGE SCALE GENOMIC DNA]</scope>
</reference>
<reference key="3">
    <citation type="journal article" date="2004" name="Genome Res.">
        <title>The status, quality, and expansion of the NIH full-length cDNA project: the Mammalian Gene Collection (MGC).</title>
        <authorList>
            <consortium name="The MGC Project Team"/>
        </authorList>
    </citation>
    <scope>NUCLEOTIDE SEQUENCE [LARGE SCALE MRNA] (ISOFORMS 1 AND 2)</scope>
    <source>
        <tissue>Brain</tissue>
    </source>
</reference>
<reference key="4">
    <citation type="journal article" date="2010" name="Cell">
        <title>A tissue-specific atlas of mouse protein phosphorylation and expression.</title>
        <authorList>
            <person name="Huttlin E.L."/>
            <person name="Jedrychowski M.P."/>
            <person name="Elias J.E."/>
            <person name="Goswami T."/>
            <person name="Rad R."/>
            <person name="Beausoleil S.A."/>
            <person name="Villen J."/>
            <person name="Haas W."/>
            <person name="Sowa M.E."/>
            <person name="Gygi S.P."/>
        </authorList>
    </citation>
    <scope>PHOSPHORYLATION [LARGE SCALE ANALYSIS] AT SER-1859</scope>
    <scope>IDENTIFICATION BY MASS SPECTROMETRY [LARGE SCALE ANALYSIS]</scope>
    <source>
        <tissue>Brain</tissue>
        <tissue>Brown adipose tissue</tissue>
        <tissue>Heart</tissue>
        <tissue>Kidney</tissue>
        <tissue>Liver</tissue>
        <tissue>Lung</tissue>
        <tissue>Pancreas</tissue>
        <tissue>Spleen</tissue>
        <tissue>Testis</tissue>
    </source>
</reference>
<dbReference type="EC" id="6.3.5.5" evidence="8"/>
<dbReference type="EC" id="3.5.1.2" evidence="4"/>
<dbReference type="EC" id="6.3.4.16" evidence="4"/>
<dbReference type="EC" id="2.1.3.2" evidence="8"/>
<dbReference type="EC" id="3.5.2.3" evidence="8"/>
<dbReference type="EMBL" id="AC109608">
    <property type="status" value="NOT_ANNOTATED_CDS"/>
    <property type="molecule type" value="Genomic_DNA"/>
</dbReference>
<dbReference type="EMBL" id="CH466524">
    <property type="protein sequence ID" value="EDL37329.1"/>
    <property type="molecule type" value="Genomic_DNA"/>
</dbReference>
<dbReference type="EMBL" id="BC137856">
    <property type="protein sequence ID" value="AAI37857.1"/>
    <property type="molecule type" value="mRNA"/>
</dbReference>
<dbReference type="EMBL" id="BC144972">
    <property type="protein sequence ID" value="AAI44973.1"/>
    <property type="molecule type" value="mRNA"/>
</dbReference>
<dbReference type="CCDS" id="CCDS19171.1">
    <molecule id="B2RQC6-1"/>
</dbReference>
<dbReference type="CCDS" id="CCDS80246.1">
    <molecule id="B2RQC6-2"/>
</dbReference>
<dbReference type="RefSeq" id="NP_001276451.1">
    <molecule id="B2RQC6-2"/>
    <property type="nucleotide sequence ID" value="NM_001289522.2"/>
</dbReference>
<dbReference type="RefSeq" id="NP_076014.1">
    <molecule id="B2RQC6-1"/>
    <property type="nucleotide sequence ID" value="NM_023525.3"/>
</dbReference>
<dbReference type="SMR" id="B2RQC6"/>
<dbReference type="BioGRID" id="213636">
    <property type="interactions" value="19"/>
</dbReference>
<dbReference type="DIP" id="DIP-61412N"/>
<dbReference type="FunCoup" id="B2RQC6">
    <property type="interactions" value="2569"/>
</dbReference>
<dbReference type="IntAct" id="B2RQC6">
    <property type="interactions" value="14"/>
</dbReference>
<dbReference type="MINT" id="B2RQC6"/>
<dbReference type="STRING" id="10090.ENSMUSP00000013773"/>
<dbReference type="BindingDB" id="B2RQC6"/>
<dbReference type="ChEMBL" id="CHEMBL2774"/>
<dbReference type="GlyGen" id="B2RQC6">
    <property type="glycosylation" value="5 sites, 1 N-linked glycan (1 site), 1 O-linked glycan (2 sites)"/>
</dbReference>
<dbReference type="iPTMnet" id="B2RQC6"/>
<dbReference type="PhosphoSitePlus" id="B2RQC6"/>
<dbReference type="SwissPalm" id="B2RQC6"/>
<dbReference type="jPOST" id="B2RQC6"/>
<dbReference type="PaxDb" id="10090-ENSMUSP00000013773"/>
<dbReference type="PeptideAtlas" id="B2RQC6"/>
<dbReference type="ProteomicsDB" id="301985">
    <molecule id="B2RQC6-1"/>
</dbReference>
<dbReference type="ProteomicsDB" id="301986">
    <molecule id="B2RQC6-2"/>
</dbReference>
<dbReference type="Pumba" id="B2RQC6"/>
<dbReference type="Antibodypedia" id="28293">
    <property type="antibodies" value="336 antibodies from 35 providers"/>
</dbReference>
<dbReference type="DNASU" id="69719"/>
<dbReference type="Ensembl" id="ENSMUST00000013773.12">
    <molecule id="B2RQC6-1"/>
    <property type="protein sequence ID" value="ENSMUSP00000013773.6"/>
    <property type="gene ID" value="ENSMUSG00000013629.17"/>
</dbReference>
<dbReference type="Ensembl" id="ENSMUST00000201182.4">
    <molecule id="B2RQC6-2"/>
    <property type="protein sequence ID" value="ENSMUSP00000144684.2"/>
    <property type="gene ID" value="ENSMUSG00000013629.17"/>
</dbReference>
<dbReference type="GeneID" id="69719"/>
<dbReference type="KEGG" id="mmu:69719"/>
<dbReference type="UCSC" id="uc008wwz.2">
    <molecule id="B2RQC6-1"/>
    <property type="organism name" value="mouse"/>
</dbReference>
<dbReference type="UCSC" id="uc012duk.2">
    <molecule id="B2RQC6-2"/>
    <property type="organism name" value="mouse"/>
</dbReference>
<dbReference type="AGR" id="MGI:1916969"/>
<dbReference type="CTD" id="790"/>
<dbReference type="MGI" id="MGI:1916969">
    <property type="gene designation" value="Cad"/>
</dbReference>
<dbReference type="VEuPathDB" id="HostDB:ENSMUSG00000013629"/>
<dbReference type="eggNOG" id="KOG0370">
    <property type="taxonomic scope" value="Eukaryota"/>
</dbReference>
<dbReference type="GeneTree" id="ENSGT00940000157241"/>
<dbReference type="HOGENOM" id="CLU_000513_2_0_1"/>
<dbReference type="InParanoid" id="B2RQC6"/>
<dbReference type="OMA" id="WSPFNGK"/>
<dbReference type="OrthoDB" id="434at2759"/>
<dbReference type="PhylomeDB" id="B2RQC6"/>
<dbReference type="TreeFam" id="TF105604"/>
<dbReference type="Reactome" id="R-MMU-500753">
    <property type="pathway name" value="Pyrimidine biosynthesis"/>
</dbReference>
<dbReference type="SABIO-RK" id="B2RQC6"/>
<dbReference type="UniPathway" id="UPA00070">
    <property type="reaction ID" value="UER00115"/>
</dbReference>
<dbReference type="UniPathway" id="UPA00070">
    <property type="reaction ID" value="UER00116"/>
</dbReference>
<dbReference type="UniPathway" id="UPA00070">
    <property type="reaction ID" value="UER00117"/>
</dbReference>
<dbReference type="BioGRID-ORCS" id="69719">
    <property type="hits" value="28 hits in 82 CRISPR screens"/>
</dbReference>
<dbReference type="ChiTaRS" id="Cad">
    <property type="organism name" value="mouse"/>
</dbReference>
<dbReference type="PRO" id="PR:B2RQC6"/>
<dbReference type="Proteomes" id="UP000000589">
    <property type="component" value="Chromosome 5"/>
</dbReference>
<dbReference type="RNAct" id="B2RQC6">
    <property type="molecule type" value="protein"/>
</dbReference>
<dbReference type="Bgee" id="ENSMUSG00000013629">
    <property type="expression patterns" value="Expressed in internal carotid artery and 259 other cell types or tissues"/>
</dbReference>
<dbReference type="ExpressionAtlas" id="B2RQC6">
    <property type="expression patterns" value="baseline and differential"/>
</dbReference>
<dbReference type="GO" id="GO:0005737">
    <property type="term" value="C:cytoplasm"/>
    <property type="evidence" value="ECO:0000266"/>
    <property type="project" value="MGI"/>
</dbReference>
<dbReference type="GO" id="GO:0005829">
    <property type="term" value="C:cytosol"/>
    <property type="evidence" value="ECO:0000266"/>
    <property type="project" value="MGI"/>
</dbReference>
<dbReference type="GO" id="GO:0043025">
    <property type="term" value="C:neuronal cell body"/>
    <property type="evidence" value="ECO:0007669"/>
    <property type="project" value="Ensembl"/>
</dbReference>
<dbReference type="GO" id="GO:0016363">
    <property type="term" value="C:nuclear matrix"/>
    <property type="evidence" value="ECO:0007669"/>
    <property type="project" value="Ensembl"/>
</dbReference>
<dbReference type="GO" id="GO:0005634">
    <property type="term" value="C:nucleus"/>
    <property type="evidence" value="ECO:0000266"/>
    <property type="project" value="MGI"/>
</dbReference>
<dbReference type="GO" id="GO:0032991">
    <property type="term" value="C:protein-containing complex"/>
    <property type="evidence" value="ECO:0007669"/>
    <property type="project" value="Ensembl"/>
</dbReference>
<dbReference type="GO" id="GO:0043195">
    <property type="term" value="C:terminal bouton"/>
    <property type="evidence" value="ECO:0007669"/>
    <property type="project" value="Ensembl"/>
</dbReference>
<dbReference type="GO" id="GO:0016597">
    <property type="term" value="F:amino acid binding"/>
    <property type="evidence" value="ECO:0007669"/>
    <property type="project" value="InterPro"/>
</dbReference>
<dbReference type="GO" id="GO:0004070">
    <property type="term" value="F:aspartate carbamoyltransferase activity"/>
    <property type="evidence" value="ECO:0000314"/>
    <property type="project" value="MGI"/>
</dbReference>
<dbReference type="GO" id="GO:0005524">
    <property type="term" value="F:ATP binding"/>
    <property type="evidence" value="ECO:0000266"/>
    <property type="project" value="MGI"/>
</dbReference>
<dbReference type="GO" id="GO:0004087">
    <property type="term" value="F:carbamoyl-phosphate synthase (ammonia) activity"/>
    <property type="evidence" value="ECO:0007669"/>
    <property type="project" value="RHEA"/>
</dbReference>
<dbReference type="GO" id="GO:0004088">
    <property type="term" value="F:carbamoyl-phosphate synthase (glutamine-hydrolyzing) activity"/>
    <property type="evidence" value="ECO:0000314"/>
    <property type="project" value="MGI"/>
</dbReference>
<dbReference type="GO" id="GO:0004151">
    <property type="term" value="F:dihydroorotase activity"/>
    <property type="evidence" value="ECO:0000315"/>
    <property type="project" value="MGI"/>
</dbReference>
<dbReference type="GO" id="GO:0019899">
    <property type="term" value="F:enzyme binding"/>
    <property type="evidence" value="ECO:0007669"/>
    <property type="project" value="Ensembl"/>
</dbReference>
<dbReference type="GO" id="GO:0004359">
    <property type="term" value="F:glutaminase activity"/>
    <property type="evidence" value="ECO:0007669"/>
    <property type="project" value="RHEA"/>
</dbReference>
<dbReference type="GO" id="GO:0042802">
    <property type="term" value="F:identical protein binding"/>
    <property type="evidence" value="ECO:0007669"/>
    <property type="project" value="Ensembl"/>
</dbReference>
<dbReference type="GO" id="GO:0004672">
    <property type="term" value="F:protein kinase activity"/>
    <property type="evidence" value="ECO:0000266"/>
    <property type="project" value="MGI"/>
</dbReference>
<dbReference type="GO" id="GO:0002134">
    <property type="term" value="F:UTP binding"/>
    <property type="evidence" value="ECO:0000266"/>
    <property type="project" value="MGI"/>
</dbReference>
<dbReference type="GO" id="GO:0008270">
    <property type="term" value="F:zinc ion binding"/>
    <property type="evidence" value="ECO:0000250"/>
    <property type="project" value="UniProtKB"/>
</dbReference>
<dbReference type="GO" id="GO:0006207">
    <property type="term" value="P:'de novo' pyrimidine nucleobase biosynthetic process"/>
    <property type="evidence" value="ECO:0000250"/>
    <property type="project" value="UniProtKB"/>
</dbReference>
<dbReference type="GO" id="GO:0044205">
    <property type="term" value="P:'de novo' UMP biosynthetic process"/>
    <property type="evidence" value="ECO:0000315"/>
    <property type="project" value="MGI"/>
</dbReference>
<dbReference type="GO" id="GO:0031100">
    <property type="term" value="P:animal organ regeneration"/>
    <property type="evidence" value="ECO:0007669"/>
    <property type="project" value="Ensembl"/>
</dbReference>
<dbReference type="GO" id="GO:0071364">
    <property type="term" value="P:cellular response to epidermal growth factor stimulus"/>
    <property type="evidence" value="ECO:0007669"/>
    <property type="project" value="Ensembl"/>
</dbReference>
<dbReference type="GO" id="GO:0019240">
    <property type="term" value="P:citrulline biosynthetic process"/>
    <property type="evidence" value="ECO:0007669"/>
    <property type="project" value="Ensembl"/>
</dbReference>
<dbReference type="GO" id="GO:0007565">
    <property type="term" value="P:female pregnancy"/>
    <property type="evidence" value="ECO:0007669"/>
    <property type="project" value="Ensembl"/>
</dbReference>
<dbReference type="GO" id="GO:0006541">
    <property type="term" value="P:glutamine metabolic process"/>
    <property type="evidence" value="ECO:0007669"/>
    <property type="project" value="Ensembl"/>
</dbReference>
<dbReference type="GO" id="GO:0007507">
    <property type="term" value="P:heart development"/>
    <property type="evidence" value="ECO:0007669"/>
    <property type="project" value="Ensembl"/>
</dbReference>
<dbReference type="GO" id="GO:0007595">
    <property type="term" value="P:lactation"/>
    <property type="evidence" value="ECO:0007669"/>
    <property type="project" value="Ensembl"/>
</dbReference>
<dbReference type="GO" id="GO:0001889">
    <property type="term" value="P:liver development"/>
    <property type="evidence" value="ECO:0007669"/>
    <property type="project" value="Ensembl"/>
</dbReference>
<dbReference type="GO" id="GO:0014075">
    <property type="term" value="P:response to amine"/>
    <property type="evidence" value="ECO:0007669"/>
    <property type="project" value="Ensembl"/>
</dbReference>
<dbReference type="GO" id="GO:0031000">
    <property type="term" value="P:response to caffeine"/>
    <property type="evidence" value="ECO:0007669"/>
    <property type="project" value="Ensembl"/>
</dbReference>
<dbReference type="GO" id="GO:0051414">
    <property type="term" value="P:response to cortisol"/>
    <property type="evidence" value="ECO:0007669"/>
    <property type="project" value="Ensembl"/>
</dbReference>
<dbReference type="GO" id="GO:0032868">
    <property type="term" value="P:response to insulin"/>
    <property type="evidence" value="ECO:0007669"/>
    <property type="project" value="Ensembl"/>
</dbReference>
<dbReference type="GO" id="GO:0042594">
    <property type="term" value="P:response to starvation"/>
    <property type="evidence" value="ECO:0007669"/>
    <property type="project" value="Ensembl"/>
</dbReference>
<dbReference type="GO" id="GO:0033574">
    <property type="term" value="P:response to testosterone"/>
    <property type="evidence" value="ECO:0007669"/>
    <property type="project" value="Ensembl"/>
</dbReference>
<dbReference type="GO" id="GO:0006225">
    <property type="term" value="P:UDP biosynthetic process"/>
    <property type="evidence" value="ECO:0000266"/>
    <property type="project" value="MGI"/>
</dbReference>
<dbReference type="GO" id="GO:0006228">
    <property type="term" value="P:UTP biosynthetic process"/>
    <property type="evidence" value="ECO:0007669"/>
    <property type="project" value="Ensembl"/>
</dbReference>
<dbReference type="GO" id="GO:0006805">
    <property type="term" value="P:xenobiotic metabolic process"/>
    <property type="evidence" value="ECO:0007669"/>
    <property type="project" value="Ensembl"/>
</dbReference>
<dbReference type="CDD" id="cd01316">
    <property type="entry name" value="CAD_DHOase"/>
    <property type="match status" value="1"/>
</dbReference>
<dbReference type="CDD" id="cd01744">
    <property type="entry name" value="GATase1_CPSase"/>
    <property type="match status" value="1"/>
</dbReference>
<dbReference type="CDD" id="cd01423">
    <property type="entry name" value="MGS_CPS_I_III"/>
    <property type="match status" value="1"/>
</dbReference>
<dbReference type="FunFam" id="3.40.50.1370:FF:000002">
    <property type="entry name" value="Aspartate carbamoyltransferase 2"/>
    <property type="match status" value="1"/>
</dbReference>
<dbReference type="FunFam" id="3.20.20.140:FF:000015">
    <property type="entry name" value="CAD protein isoform X2"/>
    <property type="match status" value="1"/>
</dbReference>
<dbReference type="FunFam" id="3.40.50.1370:FF:000005">
    <property type="entry name" value="CAD protein-like isoform X1"/>
    <property type="match status" value="1"/>
</dbReference>
<dbReference type="FunFam" id="3.40.50.1380:FF:000005">
    <property type="entry name" value="CAD protein-like isoform X1"/>
    <property type="match status" value="1"/>
</dbReference>
<dbReference type="FunFam" id="3.40.50.20:FF:000011">
    <property type="entry name" value="CAD protein-like isoform X1"/>
    <property type="match status" value="1"/>
</dbReference>
<dbReference type="FunFam" id="3.30.470.20:FF:000004">
    <property type="entry name" value="Carbamoyl-phosphate synthase (glutamine-hydrolyzing)"/>
    <property type="match status" value="1"/>
</dbReference>
<dbReference type="FunFam" id="3.40.50.880:FF:000006">
    <property type="entry name" value="Carbamoyl-phosphate synthase 1, mitochondrial"/>
    <property type="match status" value="1"/>
</dbReference>
<dbReference type="FunFam" id="3.50.30.20:FF:000002">
    <property type="entry name" value="Carbamoyl-phosphate synthase 1, mitochondrial"/>
    <property type="match status" value="1"/>
</dbReference>
<dbReference type="FunFam" id="1.10.1030.10:FF:000001">
    <property type="entry name" value="Carbamoyl-phosphate synthase large chain"/>
    <property type="match status" value="1"/>
</dbReference>
<dbReference type="FunFam" id="3.30.1490.20:FF:000001">
    <property type="entry name" value="Carbamoyl-phosphate synthase large chain"/>
    <property type="match status" value="1"/>
</dbReference>
<dbReference type="FunFam" id="3.30.470.20:FF:000001">
    <property type="entry name" value="Carbamoyl-phosphate synthase large chain"/>
    <property type="match status" value="1"/>
</dbReference>
<dbReference type="FunFam" id="3.40.50.20:FF:000002">
    <property type="entry name" value="Carbamoyl-phosphate synthase large chain"/>
    <property type="match status" value="1"/>
</dbReference>
<dbReference type="Gene3D" id="3.40.50.20">
    <property type="match status" value="2"/>
</dbReference>
<dbReference type="Gene3D" id="3.40.50.880">
    <property type="match status" value="1"/>
</dbReference>
<dbReference type="Gene3D" id="3.40.50.1370">
    <property type="entry name" value="Aspartate/ornithine carbamoyltransferase"/>
    <property type="match status" value="2"/>
</dbReference>
<dbReference type="Gene3D" id="3.30.1490.20">
    <property type="entry name" value="ATP-grasp fold, A domain"/>
    <property type="match status" value="1"/>
</dbReference>
<dbReference type="Gene3D" id="3.30.470.20">
    <property type="entry name" value="ATP-grasp fold, B domain"/>
    <property type="match status" value="2"/>
</dbReference>
<dbReference type="Gene3D" id="3.50.30.20">
    <property type="entry name" value="Carbamoyl-phosphate synthase small subunit, N-terminal domain"/>
    <property type="match status" value="1"/>
</dbReference>
<dbReference type="Gene3D" id="1.10.1030.10">
    <property type="entry name" value="Carbamoyl-phosphate synthetase, large subunit oligomerisation domain"/>
    <property type="match status" value="1"/>
</dbReference>
<dbReference type="Gene3D" id="3.20.20.140">
    <property type="entry name" value="Metal-dependent hydrolases"/>
    <property type="match status" value="1"/>
</dbReference>
<dbReference type="Gene3D" id="3.40.50.1380">
    <property type="entry name" value="Methylglyoxal synthase-like domain"/>
    <property type="match status" value="1"/>
</dbReference>
<dbReference type="HAMAP" id="MF_00001">
    <property type="entry name" value="Asp_carb_tr"/>
    <property type="match status" value="1"/>
</dbReference>
<dbReference type="HAMAP" id="MF_01209">
    <property type="entry name" value="CPSase_S_chain"/>
    <property type="match status" value="1"/>
</dbReference>
<dbReference type="InterPro" id="IPR006680">
    <property type="entry name" value="Amidohydro-rel"/>
</dbReference>
<dbReference type="InterPro" id="IPR006132">
    <property type="entry name" value="Asp/Orn_carbamoyltranf_P-bd"/>
</dbReference>
<dbReference type="InterPro" id="IPR006130">
    <property type="entry name" value="Asp/Orn_carbamoylTrfase"/>
</dbReference>
<dbReference type="InterPro" id="IPR036901">
    <property type="entry name" value="Asp/Orn_carbamoylTrfase_sf"/>
</dbReference>
<dbReference type="InterPro" id="IPR002082">
    <property type="entry name" value="Asp_carbamoyltransf"/>
</dbReference>
<dbReference type="InterPro" id="IPR006131">
    <property type="entry name" value="Asp_carbamoyltransf_Asp/Orn-bd"/>
</dbReference>
<dbReference type="InterPro" id="IPR011761">
    <property type="entry name" value="ATP-grasp"/>
</dbReference>
<dbReference type="InterPro" id="IPR013815">
    <property type="entry name" value="ATP_grasp_subdomain_1"/>
</dbReference>
<dbReference type="InterPro" id="IPR006275">
    <property type="entry name" value="CarbamoylP_synth_lsu"/>
</dbReference>
<dbReference type="InterPro" id="IPR005480">
    <property type="entry name" value="CarbamoylP_synth_lsu_oligo"/>
</dbReference>
<dbReference type="InterPro" id="IPR036897">
    <property type="entry name" value="CarbamoylP_synth_lsu_oligo_sf"/>
</dbReference>
<dbReference type="InterPro" id="IPR006274">
    <property type="entry name" value="CarbamoylP_synth_ssu"/>
</dbReference>
<dbReference type="InterPro" id="IPR002474">
    <property type="entry name" value="CarbamoylP_synth_ssu_N"/>
</dbReference>
<dbReference type="InterPro" id="IPR036480">
    <property type="entry name" value="CarbP_synth_ssu_N_sf"/>
</dbReference>
<dbReference type="InterPro" id="IPR005479">
    <property type="entry name" value="CbamoylP_synth_lsu-like_ATP-bd"/>
</dbReference>
<dbReference type="InterPro" id="IPR005483">
    <property type="entry name" value="CbamoylP_synth_lsu_CPSase_dom"/>
</dbReference>
<dbReference type="InterPro" id="IPR029062">
    <property type="entry name" value="Class_I_gatase-like"/>
</dbReference>
<dbReference type="InterPro" id="IPR035686">
    <property type="entry name" value="CPSase_GATase1"/>
</dbReference>
<dbReference type="InterPro" id="IPR002195">
    <property type="entry name" value="Dihydroorotase_CS"/>
</dbReference>
<dbReference type="InterPro" id="IPR017926">
    <property type="entry name" value="GATASE"/>
</dbReference>
<dbReference type="InterPro" id="IPR011059">
    <property type="entry name" value="Metal-dep_hydrolase_composite"/>
</dbReference>
<dbReference type="InterPro" id="IPR032466">
    <property type="entry name" value="Metal_Hydrolase"/>
</dbReference>
<dbReference type="InterPro" id="IPR011607">
    <property type="entry name" value="MGS-like_dom"/>
</dbReference>
<dbReference type="InterPro" id="IPR036914">
    <property type="entry name" value="MGS-like_dom_sf"/>
</dbReference>
<dbReference type="InterPro" id="IPR016185">
    <property type="entry name" value="PreATP-grasp_dom_sf"/>
</dbReference>
<dbReference type="NCBIfam" id="TIGR00670">
    <property type="entry name" value="asp_carb_tr"/>
    <property type="match status" value="1"/>
</dbReference>
<dbReference type="NCBIfam" id="TIGR01369">
    <property type="entry name" value="CPSaseII_lrg"/>
    <property type="match status" value="1"/>
</dbReference>
<dbReference type="NCBIfam" id="TIGR01368">
    <property type="entry name" value="CPSaseIIsmall"/>
    <property type="match status" value="1"/>
</dbReference>
<dbReference type="NCBIfam" id="NF002032">
    <property type="entry name" value="PRK00856.1"/>
    <property type="match status" value="1"/>
</dbReference>
<dbReference type="NCBIfam" id="NF003671">
    <property type="entry name" value="PRK05294.1"/>
    <property type="match status" value="1"/>
</dbReference>
<dbReference type="NCBIfam" id="NF009455">
    <property type="entry name" value="PRK12815.1"/>
    <property type="match status" value="1"/>
</dbReference>
<dbReference type="NCBIfam" id="NF009475">
    <property type="entry name" value="PRK12838.1"/>
    <property type="match status" value="1"/>
</dbReference>
<dbReference type="PANTHER" id="PTHR11405:SF4">
    <property type="entry name" value="CARBAMOYL-PHOSPHATE SYNTHASE ARGININE-SPECIFIC SMALL CHAIN"/>
    <property type="match status" value="1"/>
</dbReference>
<dbReference type="PANTHER" id="PTHR11405">
    <property type="entry name" value="CARBAMOYLTRANSFERASE FAMILY MEMBER"/>
    <property type="match status" value="1"/>
</dbReference>
<dbReference type="Pfam" id="PF01979">
    <property type="entry name" value="Amidohydro_1"/>
    <property type="match status" value="1"/>
</dbReference>
<dbReference type="Pfam" id="PF02786">
    <property type="entry name" value="CPSase_L_D2"/>
    <property type="match status" value="2"/>
</dbReference>
<dbReference type="Pfam" id="PF02787">
    <property type="entry name" value="CPSase_L_D3"/>
    <property type="match status" value="1"/>
</dbReference>
<dbReference type="Pfam" id="PF00988">
    <property type="entry name" value="CPSase_sm_chain"/>
    <property type="match status" value="1"/>
</dbReference>
<dbReference type="Pfam" id="PF00117">
    <property type="entry name" value="GATase"/>
    <property type="match status" value="1"/>
</dbReference>
<dbReference type="Pfam" id="PF02142">
    <property type="entry name" value="MGS"/>
    <property type="match status" value="1"/>
</dbReference>
<dbReference type="Pfam" id="PF00185">
    <property type="entry name" value="OTCace"/>
    <property type="match status" value="1"/>
</dbReference>
<dbReference type="Pfam" id="PF02729">
    <property type="entry name" value="OTCace_N"/>
    <property type="match status" value="1"/>
</dbReference>
<dbReference type="PRINTS" id="PR00100">
    <property type="entry name" value="AOTCASE"/>
</dbReference>
<dbReference type="PRINTS" id="PR00101">
    <property type="entry name" value="ATCASE"/>
</dbReference>
<dbReference type="PRINTS" id="PR00098">
    <property type="entry name" value="CPSASE"/>
</dbReference>
<dbReference type="PRINTS" id="PR00099">
    <property type="entry name" value="CPSGATASE"/>
</dbReference>
<dbReference type="SMART" id="SM01096">
    <property type="entry name" value="CPSase_L_D3"/>
    <property type="match status" value="1"/>
</dbReference>
<dbReference type="SMART" id="SM01097">
    <property type="entry name" value="CPSase_sm_chain"/>
    <property type="match status" value="1"/>
</dbReference>
<dbReference type="SMART" id="SM00851">
    <property type="entry name" value="MGS"/>
    <property type="match status" value="1"/>
</dbReference>
<dbReference type="SUPFAM" id="SSF53671">
    <property type="entry name" value="Aspartate/ornithine carbamoyltransferase"/>
    <property type="match status" value="1"/>
</dbReference>
<dbReference type="SUPFAM" id="SSF48108">
    <property type="entry name" value="Carbamoyl phosphate synthetase, large subunit connection domain"/>
    <property type="match status" value="1"/>
</dbReference>
<dbReference type="SUPFAM" id="SSF52021">
    <property type="entry name" value="Carbamoyl phosphate synthetase, small subunit N-terminal domain"/>
    <property type="match status" value="1"/>
</dbReference>
<dbReference type="SUPFAM" id="SSF52317">
    <property type="entry name" value="Class I glutamine amidotransferase-like"/>
    <property type="match status" value="1"/>
</dbReference>
<dbReference type="SUPFAM" id="SSF51338">
    <property type="entry name" value="Composite domain of metallo-dependent hydrolases"/>
    <property type="match status" value="1"/>
</dbReference>
<dbReference type="SUPFAM" id="SSF56059">
    <property type="entry name" value="Glutathione synthetase ATP-binding domain-like"/>
    <property type="match status" value="2"/>
</dbReference>
<dbReference type="SUPFAM" id="SSF51556">
    <property type="entry name" value="Metallo-dependent hydrolases"/>
    <property type="match status" value="1"/>
</dbReference>
<dbReference type="SUPFAM" id="SSF52335">
    <property type="entry name" value="Methylglyoxal synthase-like"/>
    <property type="match status" value="1"/>
</dbReference>
<dbReference type="SUPFAM" id="SSF52440">
    <property type="entry name" value="PreATP-grasp domain"/>
    <property type="match status" value="2"/>
</dbReference>
<dbReference type="PROSITE" id="PS50975">
    <property type="entry name" value="ATP_GRASP"/>
    <property type="match status" value="2"/>
</dbReference>
<dbReference type="PROSITE" id="PS00097">
    <property type="entry name" value="CARBAMOYLTRANSFERASE"/>
    <property type="match status" value="1"/>
</dbReference>
<dbReference type="PROSITE" id="PS00866">
    <property type="entry name" value="CPSASE_1"/>
    <property type="match status" value="2"/>
</dbReference>
<dbReference type="PROSITE" id="PS00867">
    <property type="entry name" value="CPSASE_2"/>
    <property type="match status" value="2"/>
</dbReference>
<dbReference type="PROSITE" id="PS00482">
    <property type="entry name" value="DIHYDROOROTASE_1"/>
    <property type="match status" value="1"/>
</dbReference>
<dbReference type="PROSITE" id="PS00483">
    <property type="entry name" value="DIHYDROOROTASE_2"/>
    <property type="match status" value="1"/>
</dbReference>
<dbReference type="PROSITE" id="PS51273">
    <property type="entry name" value="GATASE_TYPE_1"/>
    <property type="match status" value="1"/>
</dbReference>
<dbReference type="PROSITE" id="PS51855">
    <property type="entry name" value="MGS"/>
    <property type="match status" value="1"/>
</dbReference>
<sequence>MAALVLEDGSVLQGRPFGAAVSTAGEVVFQTGMVGYPEALTDPSYKAQILVLTYPLIGNYGIPSDEEDEFGLSKWFESSEIHVAGLVVGECCPTPSHWSANCTLHEWLQQRGIPGLQGVDTRELTKKLREQGSLLGKLVQKGTEPSALPFVDPNARPLAPEVSIKTPRVFNAGGAPRICALDCGLKYNQIRCLCQLGAEVTVVPWDHELDSQKYDGLFLSNGPGDPASYPGVVSTLSRVLSEPNPRPVFGICLGHQLLALAIGAKTYKMRYGNRGHNQPCLLVGTGRCFLTSQNHGFAVDADSLPAGWAPLFTNANDCSNEGIVHDSLPFFSVQFHPEHRAGPSDMELLFDVFLETVREAAAGNIGGQTVRERLAQRLCPPELPIPGSGLPPPRKVLILGSGGLSIGQAGEFDYSGSQAIKALKEENIQTLLINPNIATVQTSQGLADKVYFLPITLHYVTQVIRNERPDGVLLTFGGQTALNCGVELTKAGVLARYGVRVLGTPVETIELTEDRRAFAARMAEIGEHVAPSEAANSLEQAQAAAERLGYPVLVRAAFALGGLGSGFASTKEELSALVAPAFAHTSQVLIDKSLKGWKEIEYEVVRDAYGNCVTVCNMENLDPLGIHTGESIVVAPSQTLNDREYQLLRRTAIKVTQHLGIVGECNVQYALNPESEQYYIIEVNARLSRSSALASKATGYPLAYVAAKLALGIPLPELRNSVTGGTAAFEPSLDYCVVKIPRWDLSKFLRVSTKIGSCMKSVGEVMGIGRSFEEAFQKALRMVDENCVGFDHTVKPVSDMELETPTDKRIFVVAAALWAGYSVERLYELTRIDCWFLHRMKRIVTHAQLLEQHRGQALPQDLLHQAKCLGFSDKQIALAVLSTELAVRKLRQELGICPAVKQIDTVAAEWPAQTNYLYLTYWGNTHDLDFRAPHVLVLGSGVYRIGSSVEFDWCAVGCIQQLRKMGYKTIMVNYNPETVSTDYDMCDRLYFDEISFEVVMDIYELENPEGVILSMGGQLPNNMAMALHRQQCRVLGTSPEAIDSAENRFKFSRLLDTIGISQPQWRELSDLESARQFCHTVGYPCVVRPSYVLSGAAMNVAYTDGDLERFLSSAAAVSKEHPVVISKFIQEAKEIDVDAVACDGIVSAIAISEHVENAGVHSGDATLVTPPQDITPKTLERIKAIVHAVGQELQVTGPFNLQLIAKDDQLKVIECNVRVSRSFPFVSKTLGVDLVALATRIIMGEKVEPVGLMTGSGVVGVKVPQFSFSRLAGADVVLGVEMTSTGEVAGFGESRCEAYLKAMLSTGFKIPEKNILLTIGSYKNKSELLPTVRLLESLGYSLYASLGTADFYTEHGVKVTAVDWHFEEAVDGECPPQRSILDQLAENHFELVINLSMRGAGGRRLSSFVTKGYRTRRLAADFSVPLIIDIKCTKLFVEALGQIGPAPPLKVHVDCMTSQKLVRLPGLIDVHVHLREPGGTHKEDFASGTAAALAGGVTMVCAMPNTRPPIIDAPALALAQKLAEAGARCDFTLFLGASSENAGTLGAVAGSAAGLKLYLNETFSELRLDSVAQWMEHFETWPAHLPIVAHAERQSVAAVLMVAQLTQRPVHICHVARKEEILLIKTAKAQGLPVTCEVAPHHLFLNREDLERLGPGKGEVRPELGSREDMEALWENMAVIDCFASDHAPHTLEEKCGPKPPPGFPGLETMLPLLLTAVSEGRLSLDDLLQRLHHNPRRIFHLPLQEDTYVEVDLEHEWTVPSHMPFSKARWTPFEGQKVKGTVRRVVLRGEVAYIDGQVLVPPGYGQDVRKWPQGVVPQPPPSTPATTEITTTPERPRRVIPGLPDGRFHLPPRIHRASDPGLPAEEPKEKPPRKVVEPELMGTPDGPCYPAPPVPRQASPQNLGSSGLLHPQMSPLLHSLVGQHILSVKQFTKDQMSHLFNVAHTLRMMVQKERSLDILKGKVMASMFYEVSTRTSSSFAAAMARLGGAVLSFSEATSSVQKGESLADSVQTMSCYADVIVLRHPQPGAVELAAKHCRRPVINAGDGVGEHPTQALLDIFTIREELGTVNGMTITMVGDLKHGRTVHSLACLLTQYRVSLRYVAPPSLRMPPSVRDFVASRGTKQEEFESIEEALPDTDVLYMTRIQKERFGSVQEYEACFGQFILTPHIMTRAKKKMVVMHPMPRVNEISVEVDSDPRAAYFRQAENGMYIRMALLATVLGRF</sequence>
<proteinExistence type="evidence at protein level"/>
<name>PYR1_MOUSE</name>
<gene>
    <name type="primary">Cad</name>
</gene>